<accession>Q13606</accession>
<accession>Q6IEU4</accession>
<proteinExistence type="evidence at transcript level"/>
<comment type="function">
    <text evidence="3">Odorant receptor.</text>
</comment>
<comment type="subcellular location">
    <subcellularLocation>
        <location>Cell membrane</location>
        <topology>Multi-pass membrane protein</topology>
    </subcellularLocation>
</comment>
<comment type="similarity">
    <text evidence="2">Belongs to the G-protein coupled receptor 1 family.</text>
</comment>
<comment type="online information" name="Human Olfactory Receptor Data Exploratorium (HORDE)">
    <link uri="http://genome.weizmann.ac.il/horde/card/index/symbol:OR5I1"/>
</comment>
<organism>
    <name type="scientific">Homo sapiens</name>
    <name type="common">Human</name>
    <dbReference type="NCBI Taxonomy" id="9606"/>
    <lineage>
        <taxon>Eukaryota</taxon>
        <taxon>Metazoa</taxon>
        <taxon>Chordata</taxon>
        <taxon>Craniata</taxon>
        <taxon>Vertebrata</taxon>
        <taxon>Euteleostomi</taxon>
        <taxon>Mammalia</taxon>
        <taxon>Eutheria</taxon>
        <taxon>Euarchontoglires</taxon>
        <taxon>Primates</taxon>
        <taxon>Haplorrhini</taxon>
        <taxon>Catarrhini</taxon>
        <taxon>Hominidae</taxon>
        <taxon>Homo</taxon>
    </lineage>
</organism>
<keyword id="KW-1003">Cell membrane</keyword>
<keyword id="KW-1015">Disulfide bond</keyword>
<keyword id="KW-0297">G-protein coupled receptor</keyword>
<keyword id="KW-0325">Glycoprotein</keyword>
<keyword id="KW-0472">Membrane</keyword>
<keyword id="KW-0552">Olfaction</keyword>
<keyword id="KW-0675">Receptor</keyword>
<keyword id="KW-1185">Reference proteome</keyword>
<keyword id="KW-0716">Sensory transduction</keyword>
<keyword id="KW-0807">Transducer</keyword>
<keyword id="KW-0812">Transmembrane</keyword>
<keyword id="KW-1133">Transmembrane helix</keyword>
<dbReference type="EMBL" id="U56420">
    <property type="protein sequence ID" value="AAB01214.1"/>
    <property type="molecule type" value="Genomic_DNA"/>
</dbReference>
<dbReference type="EMBL" id="BC069093">
    <property type="protein sequence ID" value="AAH69093.1"/>
    <property type="molecule type" value="mRNA"/>
</dbReference>
<dbReference type="EMBL" id="BK004518">
    <property type="protein sequence ID" value="DAA04916.1"/>
    <property type="molecule type" value="Genomic_DNA"/>
</dbReference>
<dbReference type="CCDS" id="CCDS7949.1"/>
<dbReference type="RefSeq" id="NP_006628.1">
    <property type="nucleotide sequence ID" value="NM_006637.1"/>
</dbReference>
<dbReference type="SMR" id="Q13606"/>
<dbReference type="FunCoup" id="Q13606">
    <property type="interactions" value="417"/>
</dbReference>
<dbReference type="STRING" id="9606.ENSP00000301532"/>
<dbReference type="GlyCosmos" id="Q13606">
    <property type="glycosylation" value="1 site, No reported glycans"/>
</dbReference>
<dbReference type="GlyGen" id="Q13606">
    <property type="glycosylation" value="1 site"/>
</dbReference>
<dbReference type="iPTMnet" id="Q13606"/>
<dbReference type="PhosphoSitePlus" id="Q13606"/>
<dbReference type="BioMuta" id="OR5I1"/>
<dbReference type="DMDM" id="2495050"/>
<dbReference type="MassIVE" id="Q13606"/>
<dbReference type="PaxDb" id="9606-ENSP00000301532"/>
<dbReference type="PeptideAtlas" id="Q13606"/>
<dbReference type="Antibodypedia" id="58950">
    <property type="antibodies" value="107 antibodies from 22 providers"/>
</dbReference>
<dbReference type="DNASU" id="10798"/>
<dbReference type="Ensembl" id="ENST00000301532.3">
    <property type="protein sequence ID" value="ENSP00000301532.3"/>
    <property type="gene ID" value="ENSG00000167825.3"/>
</dbReference>
<dbReference type="GeneID" id="10798"/>
<dbReference type="KEGG" id="hsa:10798"/>
<dbReference type="MANE-Select" id="ENST00000301532.3">
    <property type="protein sequence ID" value="ENSP00000301532.3"/>
    <property type="RefSeq nucleotide sequence ID" value="NM_006637.1"/>
    <property type="RefSeq protein sequence ID" value="NP_006628.1"/>
</dbReference>
<dbReference type="UCSC" id="uc010ris.2">
    <property type="organism name" value="human"/>
</dbReference>
<dbReference type="AGR" id="HGNC:8347"/>
<dbReference type="CTD" id="10798"/>
<dbReference type="DisGeNET" id="10798"/>
<dbReference type="GeneCards" id="OR5I1"/>
<dbReference type="HGNC" id="HGNC:8347">
    <property type="gene designation" value="OR5I1"/>
</dbReference>
<dbReference type="HPA" id="ENSG00000167825">
    <property type="expression patterns" value="Not detected"/>
</dbReference>
<dbReference type="MIM" id="608496">
    <property type="type" value="gene"/>
</dbReference>
<dbReference type="neXtProt" id="NX_Q13606"/>
<dbReference type="OpenTargets" id="ENSG00000167825"/>
<dbReference type="PharmGKB" id="PA32540"/>
<dbReference type="VEuPathDB" id="HostDB:ENSG00000167825"/>
<dbReference type="eggNOG" id="ENOG502SIQS">
    <property type="taxonomic scope" value="Eukaryota"/>
</dbReference>
<dbReference type="GeneTree" id="ENSGT01130000278300"/>
<dbReference type="HOGENOM" id="CLU_012526_1_0_1"/>
<dbReference type="InParanoid" id="Q13606"/>
<dbReference type="OMA" id="EFTDGNY"/>
<dbReference type="OrthoDB" id="9891208at2759"/>
<dbReference type="PAN-GO" id="Q13606">
    <property type="GO annotations" value="4 GO annotations based on evolutionary models"/>
</dbReference>
<dbReference type="PhylomeDB" id="Q13606"/>
<dbReference type="TreeFam" id="TF352753"/>
<dbReference type="PathwayCommons" id="Q13606"/>
<dbReference type="Reactome" id="R-HSA-9752946">
    <property type="pathway name" value="Expression and translocation of olfactory receptors"/>
</dbReference>
<dbReference type="BioGRID-ORCS" id="10798">
    <property type="hits" value="10 hits in 744 CRISPR screens"/>
</dbReference>
<dbReference type="GeneWiki" id="OR5I1"/>
<dbReference type="GenomeRNAi" id="10798"/>
<dbReference type="Pharos" id="Q13606">
    <property type="development level" value="Tdark"/>
</dbReference>
<dbReference type="PRO" id="PR:Q13606"/>
<dbReference type="Proteomes" id="UP000005640">
    <property type="component" value="Chromosome 11"/>
</dbReference>
<dbReference type="RNAct" id="Q13606">
    <property type="molecule type" value="protein"/>
</dbReference>
<dbReference type="Bgee" id="ENSG00000167825">
    <property type="expression patterns" value="Expressed in male germ line stem cell (sensu Vertebrata) in testis and 3 other cell types or tissues"/>
</dbReference>
<dbReference type="ExpressionAtlas" id="Q13606">
    <property type="expression patterns" value="baseline and differential"/>
</dbReference>
<dbReference type="GO" id="GO:0005886">
    <property type="term" value="C:plasma membrane"/>
    <property type="evidence" value="ECO:0007669"/>
    <property type="project" value="UniProtKB-SubCell"/>
</dbReference>
<dbReference type="GO" id="GO:0004930">
    <property type="term" value="F:G protein-coupled receptor activity"/>
    <property type="evidence" value="ECO:0007669"/>
    <property type="project" value="UniProtKB-KW"/>
</dbReference>
<dbReference type="GO" id="GO:0005549">
    <property type="term" value="F:odorant binding"/>
    <property type="evidence" value="ECO:0000318"/>
    <property type="project" value="GO_Central"/>
</dbReference>
<dbReference type="GO" id="GO:0004984">
    <property type="term" value="F:olfactory receptor activity"/>
    <property type="evidence" value="ECO:0000318"/>
    <property type="project" value="GO_Central"/>
</dbReference>
<dbReference type="GO" id="GO:0007186">
    <property type="term" value="P:G protein-coupled receptor signaling pathway"/>
    <property type="evidence" value="ECO:0000318"/>
    <property type="project" value="GO_Central"/>
</dbReference>
<dbReference type="GO" id="GO:0007608">
    <property type="term" value="P:sensory perception of smell"/>
    <property type="evidence" value="ECO:0000318"/>
    <property type="project" value="GO_Central"/>
</dbReference>
<dbReference type="GO" id="GO:0007165">
    <property type="term" value="P:signal transduction"/>
    <property type="evidence" value="ECO:0000303"/>
    <property type="project" value="ProtInc"/>
</dbReference>
<dbReference type="FunFam" id="1.10.1220.70:FF:000001">
    <property type="entry name" value="Olfactory receptor"/>
    <property type="match status" value="1"/>
</dbReference>
<dbReference type="FunFam" id="1.20.1070.10:FF:000003">
    <property type="entry name" value="Olfactory receptor"/>
    <property type="match status" value="1"/>
</dbReference>
<dbReference type="Gene3D" id="1.20.1070.10">
    <property type="entry name" value="Rhodopsin 7-helix transmembrane proteins"/>
    <property type="match status" value="1"/>
</dbReference>
<dbReference type="InterPro" id="IPR000276">
    <property type="entry name" value="GPCR_Rhodpsn"/>
</dbReference>
<dbReference type="InterPro" id="IPR017452">
    <property type="entry name" value="GPCR_Rhodpsn_7TM"/>
</dbReference>
<dbReference type="InterPro" id="IPR000725">
    <property type="entry name" value="Olfact_rcpt"/>
</dbReference>
<dbReference type="PANTHER" id="PTHR48018">
    <property type="entry name" value="OLFACTORY RECEPTOR"/>
    <property type="match status" value="1"/>
</dbReference>
<dbReference type="Pfam" id="PF13853">
    <property type="entry name" value="7tm_4"/>
    <property type="match status" value="1"/>
</dbReference>
<dbReference type="PRINTS" id="PR00237">
    <property type="entry name" value="GPCRRHODOPSN"/>
</dbReference>
<dbReference type="PRINTS" id="PR00245">
    <property type="entry name" value="OLFACTORYR"/>
</dbReference>
<dbReference type="SUPFAM" id="SSF81321">
    <property type="entry name" value="Family A G protein-coupled receptor-like"/>
    <property type="match status" value="1"/>
</dbReference>
<dbReference type="PROSITE" id="PS00237">
    <property type="entry name" value="G_PROTEIN_RECEP_F1_1"/>
    <property type="match status" value="1"/>
</dbReference>
<dbReference type="PROSITE" id="PS50262">
    <property type="entry name" value="G_PROTEIN_RECEP_F1_2"/>
    <property type="match status" value="1"/>
</dbReference>
<evidence type="ECO:0000255" key="1"/>
<evidence type="ECO:0000255" key="2">
    <source>
        <dbReference type="PROSITE-ProRule" id="PRU00521"/>
    </source>
</evidence>
<evidence type="ECO:0000305" key="3"/>
<name>OR5I1_HUMAN</name>
<sequence>MEFTDRNYTLVTEFILLGFPTRPELQIVLFLMFLTLYAIILIGNIGLMLLIRIDPHLQTPMYFFLSNLSFVDLCYFSDIVPKMLVNFLSENKSISYYGCALQFYFFCTFADTESFILAAMAYDRYVAICNPLLYTVVMSRGICMRLIVLSYLGGNMSSLVHTSFAFILKYCDKNVINHFFCDLPPLLKLSCTDTTINEWLLSTYGSSVEIICFIIIIISYFFILLSVLKIRSFSGRKKTFSTCASHLTSVTIYQGTLLFIYSRPSYLYSPNTDKIISVFYTIFIPVLNPLIYSLRNKDVKDAAEKVLRSKVDSS</sequence>
<gene>
    <name type="primary">OR5I1</name>
    <name type="synonym">OLF1</name>
</gene>
<reference key="1">
    <citation type="journal article" date="1997" name="Genetics">
        <title>The evolution of mammalian olfactory receptor genes.</title>
        <authorList>
            <person name="Issel-Tarver L."/>
            <person name="Rine J."/>
        </authorList>
    </citation>
    <scope>NUCLEOTIDE SEQUENCE [GENOMIC DNA]</scope>
</reference>
<reference key="2">
    <citation type="journal article" date="2004" name="Genome Res.">
        <title>The status, quality, and expansion of the NIH full-length cDNA project: the Mammalian Gene Collection (MGC).</title>
        <authorList>
            <consortium name="The MGC Project Team"/>
        </authorList>
    </citation>
    <scope>NUCLEOTIDE SEQUENCE [LARGE SCALE MRNA]</scope>
</reference>
<reference key="3">
    <citation type="journal article" date="2004" name="Proc. Natl. Acad. Sci. U.S.A.">
        <title>The human olfactory receptor gene family.</title>
        <authorList>
            <person name="Malnic B."/>
            <person name="Godfrey P.A."/>
            <person name="Buck L.B."/>
        </authorList>
    </citation>
    <scope>IDENTIFICATION</scope>
</reference>
<reference key="4">
    <citation type="journal article" date="2004" name="Proc. Natl. Acad. Sci. U.S.A.">
        <authorList>
            <person name="Malnic B."/>
            <person name="Godfrey P.A."/>
            <person name="Buck L.B."/>
        </authorList>
    </citation>
    <scope>ERRATUM OF PUBMED:14983052</scope>
</reference>
<protein>
    <recommendedName>
        <fullName>Olfactory receptor 5I1</fullName>
    </recommendedName>
    <alternativeName>
        <fullName>Olfactory receptor OR11-159</fullName>
    </alternativeName>
    <alternativeName>
        <fullName>Olfactory receptor-like protein OLF1</fullName>
    </alternativeName>
</protein>
<feature type="chain" id="PRO_0000150598" description="Olfactory receptor 5I1">
    <location>
        <begin position="1"/>
        <end position="314"/>
    </location>
</feature>
<feature type="topological domain" description="Extracellular" evidence="1">
    <location>
        <begin position="1"/>
        <end position="27"/>
    </location>
</feature>
<feature type="transmembrane region" description="Helical; Name=1" evidence="1">
    <location>
        <begin position="28"/>
        <end position="48"/>
    </location>
</feature>
<feature type="topological domain" description="Cytoplasmic" evidence="1">
    <location>
        <begin position="49"/>
        <end position="56"/>
    </location>
</feature>
<feature type="transmembrane region" description="Helical; Name=2" evidence="1">
    <location>
        <begin position="57"/>
        <end position="77"/>
    </location>
</feature>
<feature type="topological domain" description="Extracellular" evidence="1">
    <location>
        <begin position="78"/>
        <end position="101"/>
    </location>
</feature>
<feature type="transmembrane region" description="Helical; Name=3" evidence="1">
    <location>
        <begin position="102"/>
        <end position="122"/>
    </location>
</feature>
<feature type="topological domain" description="Cytoplasmic" evidence="1">
    <location>
        <begin position="123"/>
        <end position="141"/>
    </location>
</feature>
<feature type="transmembrane region" description="Helical; Name=4" evidence="1">
    <location>
        <begin position="142"/>
        <end position="162"/>
    </location>
</feature>
<feature type="topological domain" description="Extracellular" evidence="1">
    <location>
        <begin position="163"/>
        <end position="198"/>
    </location>
</feature>
<feature type="transmembrane region" description="Helical; Name=5" evidence="1">
    <location>
        <begin position="199"/>
        <end position="219"/>
    </location>
</feature>
<feature type="topological domain" description="Cytoplasmic" evidence="1">
    <location>
        <begin position="220"/>
        <end position="239"/>
    </location>
</feature>
<feature type="transmembrane region" description="Helical; Name=6" evidence="1">
    <location>
        <begin position="240"/>
        <end position="260"/>
    </location>
</feature>
<feature type="topological domain" description="Extracellular" evidence="1">
    <location>
        <begin position="261"/>
        <end position="273"/>
    </location>
</feature>
<feature type="transmembrane region" description="Helical; Name=7" evidence="1">
    <location>
        <begin position="274"/>
        <end position="294"/>
    </location>
</feature>
<feature type="topological domain" description="Cytoplasmic" evidence="1">
    <location>
        <begin position="295"/>
        <end position="314"/>
    </location>
</feature>
<feature type="glycosylation site" description="N-linked (GlcNAc...) asparagine" evidence="1">
    <location>
        <position position="7"/>
    </location>
</feature>
<feature type="disulfide bond" evidence="2">
    <location>
        <begin position="99"/>
        <end position="191"/>
    </location>
</feature>
<feature type="sequence variant" id="VAR_053198" description="In dbSNP:rs17597625.">
    <original>R</original>
    <variation>G</variation>
    <location>
        <position position="6"/>
    </location>
</feature>
<feature type="sequence variant" id="VAR_053199" description="In dbSNP:rs4367963.">
    <original>L</original>
    <variation>S</variation>
    <location>
        <position position="50"/>
    </location>
</feature>
<feature type="sequence variant" id="VAR_024101" description="In dbSNP:rs9666086.">
    <original>F</original>
    <variation>S</variation>
    <location>
        <position position="76"/>
    </location>
</feature>
<feature type="sequence variant" id="VAR_053200" description="In dbSNP:rs9665861.">
    <original>V</original>
    <variation>I</variation>
    <location>
        <position position="306"/>
    </location>
</feature>